<gene>
    <name evidence="2" type="primary">ctvE</name>
    <name type="ORF">ATEG_09616</name>
</gene>
<dbReference type="EC" id="7.1.2.2" evidence="1"/>
<dbReference type="EMBL" id="CH476608">
    <property type="protein sequence ID" value="EAU29807.1"/>
    <property type="status" value="ALT_SEQ"/>
    <property type="molecule type" value="Genomic_DNA"/>
</dbReference>
<dbReference type="RefSeq" id="XP_001218238.1">
    <property type="nucleotide sequence ID" value="XM_001218237.1"/>
</dbReference>
<dbReference type="SMR" id="Q0C9L8"/>
<dbReference type="STRING" id="341663.Q0C9L8"/>
<dbReference type="GeneID" id="4354472"/>
<dbReference type="eggNOG" id="KOG1350">
    <property type="taxonomic scope" value="Eukaryota"/>
</dbReference>
<dbReference type="HOGENOM" id="CLU_022398_0_2_1"/>
<dbReference type="OrthoDB" id="14523at2759"/>
<dbReference type="Proteomes" id="UP000007963">
    <property type="component" value="Unassembled WGS sequence"/>
</dbReference>
<dbReference type="GO" id="GO:0005743">
    <property type="term" value="C:mitochondrial inner membrane"/>
    <property type="evidence" value="ECO:0007669"/>
    <property type="project" value="UniProtKB-SubCell"/>
</dbReference>
<dbReference type="GO" id="GO:0045259">
    <property type="term" value="C:proton-transporting ATP synthase complex"/>
    <property type="evidence" value="ECO:0007669"/>
    <property type="project" value="UniProtKB-KW"/>
</dbReference>
<dbReference type="GO" id="GO:0005524">
    <property type="term" value="F:ATP binding"/>
    <property type="evidence" value="ECO:0007669"/>
    <property type="project" value="UniProtKB-KW"/>
</dbReference>
<dbReference type="GO" id="GO:0016887">
    <property type="term" value="F:ATP hydrolysis activity"/>
    <property type="evidence" value="ECO:0007669"/>
    <property type="project" value="InterPro"/>
</dbReference>
<dbReference type="GO" id="GO:0046933">
    <property type="term" value="F:proton-transporting ATP synthase activity, rotational mechanism"/>
    <property type="evidence" value="ECO:0007669"/>
    <property type="project" value="InterPro"/>
</dbReference>
<dbReference type="GO" id="GO:0042776">
    <property type="term" value="P:proton motive force-driven mitochondrial ATP synthesis"/>
    <property type="evidence" value="ECO:0007669"/>
    <property type="project" value="TreeGrafter"/>
</dbReference>
<dbReference type="CDD" id="cd18115">
    <property type="entry name" value="ATP-synt_F1_beta_N"/>
    <property type="match status" value="1"/>
</dbReference>
<dbReference type="CDD" id="cd01133">
    <property type="entry name" value="F1-ATPase_beta_CD"/>
    <property type="match status" value="1"/>
</dbReference>
<dbReference type="FunFam" id="2.40.10.170:FF:000004">
    <property type="entry name" value="ATP synthase subunit beta"/>
    <property type="match status" value="1"/>
</dbReference>
<dbReference type="FunFam" id="3.40.50.300:FF:000026">
    <property type="entry name" value="ATP synthase subunit beta"/>
    <property type="match status" value="1"/>
</dbReference>
<dbReference type="Gene3D" id="2.40.10.170">
    <property type="match status" value="1"/>
</dbReference>
<dbReference type="Gene3D" id="1.10.1140.10">
    <property type="entry name" value="Bovine Mitochondrial F1-atpase, Atp Synthase Beta Chain, Chain D, domain 3"/>
    <property type="match status" value="1"/>
</dbReference>
<dbReference type="Gene3D" id="3.40.50.300">
    <property type="entry name" value="P-loop containing nucleotide triphosphate hydrolases"/>
    <property type="match status" value="1"/>
</dbReference>
<dbReference type="InterPro" id="IPR003593">
    <property type="entry name" value="AAA+_ATPase"/>
</dbReference>
<dbReference type="InterPro" id="IPR005722">
    <property type="entry name" value="ATP_synth_F1_bsu"/>
</dbReference>
<dbReference type="InterPro" id="IPR020003">
    <property type="entry name" value="ATPase_a/bsu_AS"/>
</dbReference>
<dbReference type="InterPro" id="IPR050053">
    <property type="entry name" value="ATPase_alpha/beta_chains"/>
</dbReference>
<dbReference type="InterPro" id="IPR004100">
    <property type="entry name" value="ATPase_F1/V1/A1_a/bsu_N"/>
</dbReference>
<dbReference type="InterPro" id="IPR036121">
    <property type="entry name" value="ATPase_F1/V1/A1_a/bsu_N_sf"/>
</dbReference>
<dbReference type="InterPro" id="IPR000194">
    <property type="entry name" value="ATPase_F1/V1/A1_a/bsu_nucl-bd"/>
</dbReference>
<dbReference type="InterPro" id="IPR024034">
    <property type="entry name" value="ATPase_F1/V1_b/a_C"/>
</dbReference>
<dbReference type="InterPro" id="IPR027417">
    <property type="entry name" value="P-loop_NTPase"/>
</dbReference>
<dbReference type="NCBIfam" id="TIGR01039">
    <property type="entry name" value="atpD"/>
    <property type="match status" value="1"/>
</dbReference>
<dbReference type="PANTHER" id="PTHR15184">
    <property type="entry name" value="ATP SYNTHASE"/>
    <property type="match status" value="1"/>
</dbReference>
<dbReference type="PANTHER" id="PTHR15184:SF71">
    <property type="entry name" value="ATP SYNTHASE SUBUNIT BETA, MITOCHONDRIAL"/>
    <property type="match status" value="1"/>
</dbReference>
<dbReference type="Pfam" id="PF00006">
    <property type="entry name" value="ATP-synt_ab"/>
    <property type="match status" value="1"/>
</dbReference>
<dbReference type="Pfam" id="PF02874">
    <property type="entry name" value="ATP-synt_ab_N"/>
    <property type="match status" value="1"/>
</dbReference>
<dbReference type="SMART" id="SM00382">
    <property type="entry name" value="AAA"/>
    <property type="match status" value="1"/>
</dbReference>
<dbReference type="SUPFAM" id="SSF47917">
    <property type="entry name" value="C-terminal domain of alpha and beta subunits of F1 ATP synthase"/>
    <property type="match status" value="1"/>
</dbReference>
<dbReference type="SUPFAM" id="SSF50615">
    <property type="entry name" value="N-terminal domain of alpha and beta subunits of F1 ATP synthase"/>
    <property type="match status" value="1"/>
</dbReference>
<dbReference type="SUPFAM" id="SSF52540">
    <property type="entry name" value="P-loop containing nucleoside triphosphate hydrolases"/>
    <property type="match status" value="1"/>
</dbReference>
<dbReference type="PROSITE" id="PS00152">
    <property type="entry name" value="ATPASE_ALPHA_BETA"/>
    <property type="match status" value="1"/>
</dbReference>
<sequence>MFRLSSGLLKGGACASRSRIPQLGRSLYSTATSAGADKTQGKIHTVIGAVVDVQFNHGRLPPILNALETTNQGKKLVLEVAQHLGEHTVRCIAMDGTEGLVRGTAVADTGNPIMVPVGPATLGRIMNVTGDPIDERGPIEGVRLMPIHTEPPAYTEQSTHAEILVTGIKVVDLLAPYARGGKIGLFGGAGVGKTVFIQELINNIAKAHGGYSVFTGVGERTREGNDLYHEMQETGVIKLDGDSKVALVFGQMNEPPGARARVALTGLTIAEYFRDEGQDVLLFIDNIFRFTQAGSEVSALLGRIPSAVGYQPTLAVDMGAMQERITTTTKGSITSVQAVYVPADDLTDPAPATTFIHLDATTELSRGISELGIYPAVDPLGSKSRLMDPRIVGEEHYDTAMRVQRTLQEYKSLQDIIAILAGVA</sequence>
<proteinExistence type="inferred from homology"/>
<name>CTVE_ASPTN</name>
<organism>
    <name type="scientific">Aspergillus terreus (strain NIH 2624 / FGSC A1156)</name>
    <dbReference type="NCBI Taxonomy" id="341663"/>
    <lineage>
        <taxon>Eukaryota</taxon>
        <taxon>Fungi</taxon>
        <taxon>Dikarya</taxon>
        <taxon>Ascomycota</taxon>
        <taxon>Pezizomycotina</taxon>
        <taxon>Eurotiomycetes</taxon>
        <taxon>Eurotiomycetidae</taxon>
        <taxon>Eurotiales</taxon>
        <taxon>Aspergillaceae</taxon>
        <taxon>Aspergillus</taxon>
        <taxon>Aspergillus subgen. Circumdati</taxon>
    </lineage>
</organism>
<keyword id="KW-0066">ATP synthesis</keyword>
<keyword id="KW-0067">ATP-binding</keyword>
<keyword id="KW-0139">CF(1)</keyword>
<keyword id="KW-0375">Hydrogen ion transport</keyword>
<keyword id="KW-0406">Ion transport</keyword>
<keyword id="KW-0472">Membrane</keyword>
<keyword id="KW-0496">Mitochondrion</keyword>
<keyword id="KW-0999">Mitochondrion inner membrane</keyword>
<keyword id="KW-0547">Nucleotide-binding</keyword>
<keyword id="KW-1185">Reference proteome</keyword>
<keyword id="KW-0809">Transit peptide</keyword>
<keyword id="KW-1278">Translocase</keyword>
<keyword id="KW-0813">Transport</keyword>
<reference key="1">
    <citation type="submission" date="2005-09" db="EMBL/GenBank/DDBJ databases">
        <title>Annotation of the Aspergillus terreus NIH2624 genome.</title>
        <authorList>
            <person name="Birren B.W."/>
            <person name="Lander E.S."/>
            <person name="Galagan J.E."/>
            <person name="Nusbaum C."/>
            <person name="Devon K."/>
            <person name="Henn M."/>
            <person name="Ma L.-J."/>
            <person name="Jaffe D.B."/>
            <person name="Butler J."/>
            <person name="Alvarez P."/>
            <person name="Gnerre S."/>
            <person name="Grabherr M."/>
            <person name="Kleber M."/>
            <person name="Mauceli E.W."/>
            <person name="Brockman W."/>
            <person name="Rounsley S."/>
            <person name="Young S.K."/>
            <person name="LaButti K."/>
            <person name="Pushparaj V."/>
            <person name="DeCaprio D."/>
            <person name="Crawford M."/>
            <person name="Koehrsen M."/>
            <person name="Engels R."/>
            <person name="Montgomery P."/>
            <person name="Pearson M."/>
            <person name="Howarth C."/>
            <person name="Larson L."/>
            <person name="Luoma S."/>
            <person name="White J."/>
            <person name="Alvarado L."/>
            <person name="Kodira C.D."/>
            <person name="Zeng Q."/>
            <person name="Oleary S."/>
            <person name="Yandava C."/>
            <person name="Denning D.W."/>
            <person name="Nierman W.C."/>
            <person name="Milne T."/>
            <person name="Madden K."/>
        </authorList>
    </citation>
    <scope>NUCLEOTIDE SEQUENCE [LARGE SCALE GENOMIC DNA]</scope>
    <source>
        <strain>NIH 2624 / FGSC A1156</strain>
    </source>
</reference>
<reference key="2">
    <citation type="journal article" date="2016" name="Org. Lett.">
        <title>Biosynthetic pathway of the reduced polyketide product citreoviridin in Aspergillus terreus var. aureus revealed by heterologous expression in Aspergillus nidulans.</title>
        <authorList>
            <person name="Lin T.S."/>
            <person name="Chiang Y.M."/>
            <person name="Wang C.C."/>
        </authorList>
    </citation>
    <scope>FUNCTION</scope>
</reference>
<evidence type="ECO:0000250" key="1">
    <source>
        <dbReference type="UniProtKB" id="P00830"/>
    </source>
</evidence>
<evidence type="ECO:0000303" key="2">
    <source>
    </source>
</evidence>
<evidence type="ECO:0000305" key="3"/>
<evidence type="ECO:0000305" key="4">
    <source>
    </source>
</evidence>
<comment type="function">
    <text evidence="1 4">ATP synthase subunit beta; part of the gene cluster that mediates the biosynthesis of citreoviridin, an inhibitor of the of F1-ATPase beta-subunit (PubMed:26954888). Mitochondrial membrane ATP synthase (F(1)F(0) ATP synthase or Complex V) produces ATP from ADP in the presence of a proton gradient across the membrane which is generated by electron transport complexes of the respiratory chain (By similarity). Whereas ctvA to ctvD constitute the core biosynthetic gene cluster, ctvE acts as a self-resistance gene (PubMed:26954888).</text>
</comment>
<comment type="catalytic activity">
    <reaction evidence="1">
        <text>ATP + H2O + 4 H(+)(in) = ADP + phosphate + 5 H(+)(out)</text>
        <dbReference type="Rhea" id="RHEA:57720"/>
        <dbReference type="ChEBI" id="CHEBI:15377"/>
        <dbReference type="ChEBI" id="CHEBI:15378"/>
        <dbReference type="ChEBI" id="CHEBI:30616"/>
        <dbReference type="ChEBI" id="CHEBI:43474"/>
        <dbReference type="ChEBI" id="CHEBI:456216"/>
        <dbReference type="EC" id="7.1.2.2"/>
    </reaction>
</comment>
<comment type="subunit">
    <text evidence="1">F-type ATPases have 2 components, CF(1) - the catalytic core - and CF(0) - the membrane proton channel. CF(1) has five subunits: alpha(3), beta(3), gamma(1), delta(1), epsilon(1). CF(0) has three main subunits: a, b and c (By similarity).</text>
</comment>
<comment type="subcellular location">
    <subcellularLocation>
        <location>Mitochondrion</location>
    </subcellularLocation>
    <subcellularLocation>
        <location evidence="1">Mitochondrion inner membrane</location>
    </subcellularLocation>
    <text evidence="1">Peripheral membrane protein (By similarity).</text>
</comment>
<comment type="similarity">
    <text evidence="3">Belongs to the ATPase alpha/beta chains family.</text>
</comment>
<comment type="sequence caution" evidence="3">
    <conflict type="erroneous gene model prediction">
        <sequence resource="EMBL-CDS" id="EAU29807"/>
    </conflict>
</comment>
<protein>
    <recommendedName>
        <fullName evidence="2">ATP synthase subunit beta, mitochondrial</fullName>
        <ecNumber evidence="1">7.1.2.2</ecNumber>
    </recommendedName>
    <alternativeName>
        <fullName evidence="3">Citreoviridin biosynthesis protein E</fullName>
    </alternativeName>
</protein>
<feature type="transit peptide" description="Mitochondrion">
    <location>
        <begin position="1"/>
        <end position="60"/>
    </location>
</feature>
<feature type="chain" id="PRO_0000437742" description="ATP synthase subunit beta, mitochondrial">
    <location>
        <begin position="61"/>
        <end position="424"/>
    </location>
</feature>
<feature type="binding site" evidence="1">
    <location>
        <begin position="187"/>
        <end position="194"/>
    </location>
    <ligand>
        <name>ATP</name>
        <dbReference type="ChEBI" id="CHEBI:30616"/>
    </ligand>
</feature>
<feature type="binding site" evidence="1">
    <location>
        <begin position="188"/>
        <end position="195"/>
    </location>
    <ligand>
        <name>ATP</name>
        <dbReference type="ChEBI" id="CHEBI:30616"/>
    </ligand>
</feature>
<feature type="binding site" evidence="1">
    <location>
        <begin position="219"/>
        <end position="220"/>
    </location>
    <ligand>
        <name>ATP</name>
        <dbReference type="ChEBI" id="CHEBI:30616"/>
    </ligand>
</feature>
<feature type="binding site" evidence="1">
    <location>
        <position position="374"/>
    </location>
    <ligand>
        <name>ATP</name>
        <dbReference type="ChEBI" id="CHEBI:30616"/>
    </ligand>
</feature>
<accession>Q0C9L8</accession>